<protein>
    <recommendedName>
        <fullName>CB1 cannabinoid receptor-interacting protein 1</fullName>
        <shortName>CRIP-1</shortName>
    </recommendedName>
</protein>
<evidence type="ECO:0000250" key="1"/>
<evidence type="ECO:0000269" key="2">
    <source>
    </source>
</evidence>
<evidence type="ECO:0000305" key="3"/>
<organism>
    <name type="scientific">Mus musculus</name>
    <name type="common">Mouse</name>
    <dbReference type="NCBI Taxonomy" id="10090"/>
    <lineage>
        <taxon>Eukaryota</taxon>
        <taxon>Metazoa</taxon>
        <taxon>Chordata</taxon>
        <taxon>Craniata</taxon>
        <taxon>Vertebrata</taxon>
        <taxon>Euteleostomi</taxon>
        <taxon>Mammalia</taxon>
        <taxon>Eutheria</taxon>
        <taxon>Euarchontoglires</taxon>
        <taxon>Glires</taxon>
        <taxon>Rodentia</taxon>
        <taxon>Myomorpha</taxon>
        <taxon>Muroidea</taxon>
        <taxon>Muridae</taxon>
        <taxon>Murinae</taxon>
        <taxon>Mus</taxon>
        <taxon>Mus</taxon>
    </lineage>
</organism>
<reference key="1">
    <citation type="journal article" date="2005" name="Science">
        <title>The transcriptional landscape of the mammalian genome.</title>
        <authorList>
            <person name="Carninci P."/>
            <person name="Kasukawa T."/>
            <person name="Katayama S."/>
            <person name="Gough J."/>
            <person name="Frith M.C."/>
            <person name="Maeda N."/>
            <person name="Oyama R."/>
            <person name="Ravasi T."/>
            <person name="Lenhard B."/>
            <person name="Wells C."/>
            <person name="Kodzius R."/>
            <person name="Shimokawa K."/>
            <person name="Bajic V.B."/>
            <person name="Brenner S.E."/>
            <person name="Batalov S."/>
            <person name="Forrest A.R."/>
            <person name="Zavolan M."/>
            <person name="Davis M.J."/>
            <person name="Wilming L.G."/>
            <person name="Aidinis V."/>
            <person name="Allen J.E."/>
            <person name="Ambesi-Impiombato A."/>
            <person name="Apweiler R."/>
            <person name="Aturaliya R.N."/>
            <person name="Bailey T.L."/>
            <person name="Bansal M."/>
            <person name="Baxter L."/>
            <person name="Beisel K.W."/>
            <person name="Bersano T."/>
            <person name="Bono H."/>
            <person name="Chalk A.M."/>
            <person name="Chiu K.P."/>
            <person name="Choudhary V."/>
            <person name="Christoffels A."/>
            <person name="Clutterbuck D.R."/>
            <person name="Crowe M.L."/>
            <person name="Dalla E."/>
            <person name="Dalrymple B.P."/>
            <person name="de Bono B."/>
            <person name="Della Gatta G."/>
            <person name="di Bernardo D."/>
            <person name="Down T."/>
            <person name="Engstrom P."/>
            <person name="Fagiolini M."/>
            <person name="Faulkner G."/>
            <person name="Fletcher C.F."/>
            <person name="Fukushima T."/>
            <person name="Furuno M."/>
            <person name="Futaki S."/>
            <person name="Gariboldi M."/>
            <person name="Georgii-Hemming P."/>
            <person name="Gingeras T.R."/>
            <person name="Gojobori T."/>
            <person name="Green R.E."/>
            <person name="Gustincich S."/>
            <person name="Harbers M."/>
            <person name="Hayashi Y."/>
            <person name="Hensch T.K."/>
            <person name="Hirokawa N."/>
            <person name="Hill D."/>
            <person name="Huminiecki L."/>
            <person name="Iacono M."/>
            <person name="Ikeo K."/>
            <person name="Iwama A."/>
            <person name="Ishikawa T."/>
            <person name="Jakt M."/>
            <person name="Kanapin A."/>
            <person name="Katoh M."/>
            <person name="Kawasawa Y."/>
            <person name="Kelso J."/>
            <person name="Kitamura H."/>
            <person name="Kitano H."/>
            <person name="Kollias G."/>
            <person name="Krishnan S.P."/>
            <person name="Kruger A."/>
            <person name="Kummerfeld S.K."/>
            <person name="Kurochkin I.V."/>
            <person name="Lareau L.F."/>
            <person name="Lazarevic D."/>
            <person name="Lipovich L."/>
            <person name="Liu J."/>
            <person name="Liuni S."/>
            <person name="McWilliam S."/>
            <person name="Madan Babu M."/>
            <person name="Madera M."/>
            <person name="Marchionni L."/>
            <person name="Matsuda H."/>
            <person name="Matsuzawa S."/>
            <person name="Miki H."/>
            <person name="Mignone F."/>
            <person name="Miyake S."/>
            <person name="Morris K."/>
            <person name="Mottagui-Tabar S."/>
            <person name="Mulder N."/>
            <person name="Nakano N."/>
            <person name="Nakauchi H."/>
            <person name="Ng P."/>
            <person name="Nilsson R."/>
            <person name="Nishiguchi S."/>
            <person name="Nishikawa S."/>
            <person name="Nori F."/>
            <person name="Ohara O."/>
            <person name="Okazaki Y."/>
            <person name="Orlando V."/>
            <person name="Pang K.C."/>
            <person name="Pavan W.J."/>
            <person name="Pavesi G."/>
            <person name="Pesole G."/>
            <person name="Petrovsky N."/>
            <person name="Piazza S."/>
            <person name="Reed J."/>
            <person name="Reid J.F."/>
            <person name="Ring B.Z."/>
            <person name="Ringwald M."/>
            <person name="Rost B."/>
            <person name="Ruan Y."/>
            <person name="Salzberg S.L."/>
            <person name="Sandelin A."/>
            <person name="Schneider C."/>
            <person name="Schoenbach C."/>
            <person name="Sekiguchi K."/>
            <person name="Semple C.A."/>
            <person name="Seno S."/>
            <person name="Sessa L."/>
            <person name="Sheng Y."/>
            <person name="Shibata Y."/>
            <person name="Shimada H."/>
            <person name="Shimada K."/>
            <person name="Silva D."/>
            <person name="Sinclair B."/>
            <person name="Sperling S."/>
            <person name="Stupka E."/>
            <person name="Sugiura K."/>
            <person name="Sultana R."/>
            <person name="Takenaka Y."/>
            <person name="Taki K."/>
            <person name="Tammoja K."/>
            <person name="Tan S.L."/>
            <person name="Tang S."/>
            <person name="Taylor M.S."/>
            <person name="Tegner J."/>
            <person name="Teichmann S.A."/>
            <person name="Ueda H.R."/>
            <person name="van Nimwegen E."/>
            <person name="Verardo R."/>
            <person name="Wei C.L."/>
            <person name="Yagi K."/>
            <person name="Yamanishi H."/>
            <person name="Zabarovsky E."/>
            <person name="Zhu S."/>
            <person name="Zimmer A."/>
            <person name="Hide W."/>
            <person name="Bult C."/>
            <person name="Grimmond S.M."/>
            <person name="Teasdale R.D."/>
            <person name="Liu E.T."/>
            <person name="Brusic V."/>
            <person name="Quackenbush J."/>
            <person name="Wahlestedt C."/>
            <person name="Mattick J.S."/>
            <person name="Hume D.A."/>
            <person name="Kai C."/>
            <person name="Sasaki D."/>
            <person name="Tomaru Y."/>
            <person name="Fukuda S."/>
            <person name="Kanamori-Katayama M."/>
            <person name="Suzuki M."/>
            <person name="Aoki J."/>
            <person name="Arakawa T."/>
            <person name="Iida J."/>
            <person name="Imamura K."/>
            <person name="Itoh M."/>
            <person name="Kato T."/>
            <person name="Kawaji H."/>
            <person name="Kawagashira N."/>
            <person name="Kawashima T."/>
            <person name="Kojima M."/>
            <person name="Kondo S."/>
            <person name="Konno H."/>
            <person name="Nakano K."/>
            <person name="Ninomiya N."/>
            <person name="Nishio T."/>
            <person name="Okada M."/>
            <person name="Plessy C."/>
            <person name="Shibata K."/>
            <person name="Shiraki T."/>
            <person name="Suzuki S."/>
            <person name="Tagami M."/>
            <person name="Waki K."/>
            <person name="Watahiki A."/>
            <person name="Okamura-Oho Y."/>
            <person name="Suzuki H."/>
            <person name="Kawai J."/>
            <person name="Hayashizaki Y."/>
        </authorList>
    </citation>
    <scope>NUCLEOTIDE SEQUENCE [LARGE SCALE MRNA]</scope>
    <source>
        <strain>C57BL/6J</strain>
        <strain>NOD</strain>
        <tissue>Spleen</tissue>
    </source>
</reference>
<reference key="2">
    <citation type="journal article" date="2009" name="PLoS Biol.">
        <title>Lineage-specific biology revealed by a finished genome assembly of the mouse.</title>
        <authorList>
            <person name="Church D.M."/>
            <person name="Goodstadt L."/>
            <person name="Hillier L.W."/>
            <person name="Zody M.C."/>
            <person name="Goldstein S."/>
            <person name="She X."/>
            <person name="Bult C.J."/>
            <person name="Agarwala R."/>
            <person name="Cherry J.L."/>
            <person name="DiCuccio M."/>
            <person name="Hlavina W."/>
            <person name="Kapustin Y."/>
            <person name="Meric P."/>
            <person name="Maglott D."/>
            <person name="Birtle Z."/>
            <person name="Marques A.C."/>
            <person name="Graves T."/>
            <person name="Zhou S."/>
            <person name="Teague B."/>
            <person name="Potamousis K."/>
            <person name="Churas C."/>
            <person name="Place M."/>
            <person name="Herschleb J."/>
            <person name="Runnheim R."/>
            <person name="Forrest D."/>
            <person name="Amos-Landgraf J."/>
            <person name="Schwartz D.C."/>
            <person name="Cheng Z."/>
            <person name="Lindblad-Toh K."/>
            <person name="Eichler E.E."/>
            <person name="Ponting C.P."/>
        </authorList>
    </citation>
    <scope>NUCLEOTIDE SEQUENCE [LARGE SCALE GENOMIC DNA]</scope>
    <source>
        <strain>C57BL/6J</strain>
    </source>
</reference>
<reference key="3">
    <citation type="submission" date="2005-07" db="EMBL/GenBank/DDBJ databases">
        <authorList>
            <person name="Mural R.J."/>
            <person name="Adams M.D."/>
            <person name="Myers E.W."/>
            <person name="Smith H.O."/>
            <person name="Venter J.C."/>
        </authorList>
    </citation>
    <scope>NUCLEOTIDE SEQUENCE [LARGE SCALE GENOMIC DNA]</scope>
</reference>
<reference key="4">
    <citation type="journal article" date="2004" name="Genome Res.">
        <title>The status, quality, and expansion of the NIH full-length cDNA project: the Mammalian Gene Collection (MGC).</title>
        <authorList>
            <consortium name="The MGC Project Team"/>
        </authorList>
    </citation>
    <scope>NUCLEOTIDE SEQUENCE [LARGE SCALE MRNA]</scope>
    <source>
        <tissue>Brain</tissue>
    </source>
</reference>
<reference key="5">
    <citation type="journal article" date="2007" name="Mol. Pharmacol.">
        <title>CB1 cannabinoid receptor activity is modulated by the cannabinoid receptor interacting protein CRIP 1a.</title>
        <authorList>
            <person name="Niehaus J.L."/>
            <person name="Liu Y."/>
            <person name="Wallis K.T."/>
            <person name="Egertova M."/>
            <person name="Bhartur S.G."/>
            <person name="Mukhopadhyay S."/>
            <person name="Shi S."/>
            <person name="He H."/>
            <person name="Selley D.E."/>
            <person name="Howlett A.C."/>
            <person name="Elphick M.R."/>
            <person name="Lewis D.L."/>
        </authorList>
    </citation>
    <scope>TISSUE SPECIFICITY</scope>
</reference>
<reference key="6">
    <citation type="journal article" date="2010" name="Cell">
        <title>A tissue-specific atlas of mouse protein phosphorylation and expression.</title>
        <authorList>
            <person name="Huttlin E.L."/>
            <person name="Jedrychowski M.P."/>
            <person name="Elias J.E."/>
            <person name="Goswami T."/>
            <person name="Rad R."/>
            <person name="Beausoleil S.A."/>
            <person name="Villen J."/>
            <person name="Haas W."/>
            <person name="Sowa M.E."/>
            <person name="Gygi S.P."/>
        </authorList>
    </citation>
    <scope>IDENTIFICATION BY MASS SPECTROMETRY [LARGE SCALE ANALYSIS]</scope>
    <source>
        <tissue>Brain</tissue>
        <tissue>Brown adipose tissue</tissue>
        <tissue>Heart</tissue>
        <tissue>Kidney</tissue>
        <tissue>Liver</tissue>
        <tissue>Lung</tissue>
        <tissue>Pancreas</tissue>
        <tissue>Spleen</tissue>
        <tissue>Testis</tissue>
    </source>
</reference>
<accession>Q5M8N0</accession>
<accession>Q3TAC7</accession>
<accession>Q3UFR2</accession>
<name>CNRP1_MOUSE</name>
<dbReference type="EMBL" id="AK148349">
    <property type="protein sequence ID" value="BAE28498.1"/>
    <property type="molecule type" value="mRNA"/>
</dbReference>
<dbReference type="EMBL" id="AK171947">
    <property type="protein sequence ID" value="BAE42741.1"/>
    <property type="molecule type" value="mRNA"/>
</dbReference>
<dbReference type="EMBL" id="AL606466">
    <property type="status" value="NOT_ANNOTATED_CDS"/>
    <property type="molecule type" value="Genomic_DNA"/>
</dbReference>
<dbReference type="EMBL" id="CH466574">
    <property type="protein sequence ID" value="EDL40679.1"/>
    <property type="molecule type" value="Genomic_DNA"/>
</dbReference>
<dbReference type="EMBL" id="CH466574">
    <property type="protein sequence ID" value="EDL40680.1"/>
    <property type="molecule type" value="Genomic_DNA"/>
</dbReference>
<dbReference type="EMBL" id="BC087946">
    <property type="protein sequence ID" value="AAH87946.1"/>
    <property type="molecule type" value="mRNA"/>
</dbReference>
<dbReference type="CCDS" id="CCDS24447.1"/>
<dbReference type="RefSeq" id="NP_084137.1">
    <property type="nucleotide sequence ID" value="NM_029861.3"/>
</dbReference>
<dbReference type="SMR" id="Q5M8N0"/>
<dbReference type="BioGRID" id="237596">
    <property type="interactions" value="4"/>
</dbReference>
<dbReference type="FunCoup" id="Q5M8N0">
    <property type="interactions" value="663"/>
</dbReference>
<dbReference type="IntAct" id="Q5M8N0">
    <property type="interactions" value="3"/>
</dbReference>
<dbReference type="MINT" id="Q5M8N0"/>
<dbReference type="STRING" id="10090.ENSMUSP00000050036"/>
<dbReference type="GlyGen" id="Q5M8N0">
    <property type="glycosylation" value="1 site"/>
</dbReference>
<dbReference type="iPTMnet" id="Q5M8N0"/>
<dbReference type="PhosphoSitePlus" id="Q5M8N0"/>
<dbReference type="SwissPalm" id="Q5M8N0"/>
<dbReference type="PaxDb" id="10090-ENSMUSP00000050036"/>
<dbReference type="PeptideAtlas" id="Q5M8N0"/>
<dbReference type="ProteomicsDB" id="283583"/>
<dbReference type="Antibodypedia" id="30920">
    <property type="antibodies" value="91 antibodies from 23 providers"/>
</dbReference>
<dbReference type="DNASU" id="380686"/>
<dbReference type="Ensembl" id="ENSMUST00000058159.6">
    <property type="protein sequence ID" value="ENSMUSP00000050036.6"/>
    <property type="gene ID" value="ENSMUSG00000044629.6"/>
</dbReference>
<dbReference type="GeneID" id="380686"/>
<dbReference type="KEGG" id="mmu:380686"/>
<dbReference type="UCSC" id="uc007iby.1">
    <property type="organism name" value="mouse"/>
</dbReference>
<dbReference type="AGR" id="MGI:1917505"/>
<dbReference type="CTD" id="25927"/>
<dbReference type="MGI" id="MGI:1917505">
    <property type="gene designation" value="Cnrip1"/>
</dbReference>
<dbReference type="VEuPathDB" id="HostDB:ENSMUSG00000044629"/>
<dbReference type="eggNOG" id="ENOG502QTXE">
    <property type="taxonomic scope" value="Eukaryota"/>
</dbReference>
<dbReference type="GeneTree" id="ENSGT00390000004284"/>
<dbReference type="HOGENOM" id="CLU_110298_0_0_1"/>
<dbReference type="InParanoid" id="Q5M8N0"/>
<dbReference type="OMA" id="YCKMETS"/>
<dbReference type="OrthoDB" id="995at9989"/>
<dbReference type="PhylomeDB" id="Q5M8N0"/>
<dbReference type="TreeFam" id="TF332485"/>
<dbReference type="BioGRID-ORCS" id="380686">
    <property type="hits" value="3 hits in 76 CRISPR screens"/>
</dbReference>
<dbReference type="ChiTaRS" id="Cnrip1">
    <property type="organism name" value="mouse"/>
</dbReference>
<dbReference type="PRO" id="PR:Q5M8N0"/>
<dbReference type="Proteomes" id="UP000000589">
    <property type="component" value="Chromosome 11"/>
</dbReference>
<dbReference type="RNAct" id="Q5M8N0">
    <property type="molecule type" value="protein"/>
</dbReference>
<dbReference type="Bgee" id="ENSMUSG00000044629">
    <property type="expression patterns" value="Expressed in piriform cortex and 215 other cell types or tissues"/>
</dbReference>
<dbReference type="ExpressionAtlas" id="Q5M8N0">
    <property type="expression patterns" value="baseline and differential"/>
</dbReference>
<dbReference type="GO" id="GO:0005737">
    <property type="term" value="C:cytoplasm"/>
    <property type="evidence" value="ECO:0007669"/>
    <property type="project" value="Ensembl"/>
</dbReference>
<dbReference type="GO" id="GO:0098982">
    <property type="term" value="C:GABA-ergic synapse"/>
    <property type="evidence" value="ECO:0000314"/>
    <property type="project" value="SynGO"/>
</dbReference>
<dbReference type="GO" id="GO:0098978">
    <property type="term" value="C:glutamatergic synapse"/>
    <property type="evidence" value="ECO:0000314"/>
    <property type="project" value="SynGO"/>
</dbReference>
<dbReference type="GO" id="GO:0043209">
    <property type="term" value="C:myelin sheath"/>
    <property type="evidence" value="ECO:0007005"/>
    <property type="project" value="UniProtKB"/>
</dbReference>
<dbReference type="GO" id="GO:0005886">
    <property type="term" value="C:plasma membrane"/>
    <property type="evidence" value="ECO:0007669"/>
    <property type="project" value="Ensembl"/>
</dbReference>
<dbReference type="GO" id="GO:0098793">
    <property type="term" value="C:presynapse"/>
    <property type="evidence" value="ECO:0000314"/>
    <property type="project" value="SynGO"/>
</dbReference>
<dbReference type="GO" id="GO:0031718">
    <property type="term" value="F:type 1 cannabinoid receptor binding"/>
    <property type="evidence" value="ECO:0007669"/>
    <property type="project" value="Ensembl"/>
</dbReference>
<dbReference type="GO" id="GO:0150036">
    <property type="term" value="P:regulation of trans-synaptic signaling by endocannabinoid, modulating synaptic transmission"/>
    <property type="evidence" value="ECO:0000314"/>
    <property type="project" value="SynGO"/>
</dbReference>
<dbReference type="InterPro" id="IPR029204">
    <property type="entry name" value="CNRIP1"/>
</dbReference>
<dbReference type="PANTHER" id="PTHR31952">
    <property type="entry name" value="CB1 CANNABINOID RECEPTOR-INTERACTING PROTEIN 1"/>
    <property type="match status" value="1"/>
</dbReference>
<dbReference type="PANTHER" id="PTHR31952:SF1">
    <property type="entry name" value="CB1 CANNABINOID RECEPTOR-INTERACTING PROTEIN 1"/>
    <property type="match status" value="1"/>
</dbReference>
<dbReference type="Pfam" id="PF15043">
    <property type="entry name" value="CNRIP1"/>
    <property type="match status" value="1"/>
</dbReference>
<feature type="chain" id="PRO_0000089362" description="CB1 cannabinoid receptor-interacting protein 1">
    <location>
        <begin position="1"/>
        <end position="164"/>
    </location>
</feature>
<feature type="sequence conflict" description="In Ref. 1; BAE28498." evidence="3" ref="1">
    <original>P</original>
    <variation>H</variation>
    <location>
        <position position="149"/>
    </location>
</feature>
<proteinExistence type="evidence at protein level"/>
<keyword id="KW-1185">Reference proteome</keyword>
<gene>
    <name type="primary">Cnrip1</name>
</gene>
<comment type="function">
    <text evidence="1">Suppresses cannabinoid receptor CNR1-mediated tonic inhibition of voltage-gated calcium channels.</text>
</comment>
<comment type="subunit">
    <text evidence="1">Interacts with the cannabinoid receptor CNR1 (via C-terminus). Does not interact with cannabinoid receptor CNR2 (By similarity).</text>
</comment>
<comment type="tissue specificity">
    <text evidence="2">Highly expressed in brain. Also detected in heart, lung, intestine, kidney, testis, spleen, liver and muscle (at protein level).</text>
</comment>
<comment type="similarity">
    <text evidence="3">Belongs to the CNRIP family.</text>
</comment>
<sequence length="164" mass="18612">MGDLPGLVRLSIALRIQPNDGPVFFKVDGQRFGQNRTIKLLTGSSYKVEVKIKPTTLQVENISIGGVLVPLELKGKEPDGERVVYTGIYDTEGVAPTKSGERQPIQITMPFTDIGTFETVWQVKFYNYHKRDHCQWGSPFSVIEYECKPNETRSLMWVNKESFL</sequence>